<reference key="1">
    <citation type="journal article" date="2009" name="PLoS Genet.">
        <title>Organised genome dynamics in the Escherichia coli species results in highly diverse adaptive paths.</title>
        <authorList>
            <person name="Touchon M."/>
            <person name="Hoede C."/>
            <person name="Tenaillon O."/>
            <person name="Barbe V."/>
            <person name="Baeriswyl S."/>
            <person name="Bidet P."/>
            <person name="Bingen E."/>
            <person name="Bonacorsi S."/>
            <person name="Bouchier C."/>
            <person name="Bouvet O."/>
            <person name="Calteau A."/>
            <person name="Chiapello H."/>
            <person name="Clermont O."/>
            <person name="Cruveiller S."/>
            <person name="Danchin A."/>
            <person name="Diard M."/>
            <person name="Dossat C."/>
            <person name="Karoui M.E."/>
            <person name="Frapy E."/>
            <person name="Garry L."/>
            <person name="Ghigo J.M."/>
            <person name="Gilles A.M."/>
            <person name="Johnson J."/>
            <person name="Le Bouguenec C."/>
            <person name="Lescat M."/>
            <person name="Mangenot S."/>
            <person name="Martinez-Jehanne V."/>
            <person name="Matic I."/>
            <person name="Nassif X."/>
            <person name="Oztas S."/>
            <person name="Petit M.A."/>
            <person name="Pichon C."/>
            <person name="Rouy Z."/>
            <person name="Ruf C.S."/>
            <person name="Schneider D."/>
            <person name="Tourret J."/>
            <person name="Vacherie B."/>
            <person name="Vallenet D."/>
            <person name="Medigue C."/>
            <person name="Rocha E.P.C."/>
            <person name="Denamur E."/>
        </authorList>
    </citation>
    <scope>NUCLEOTIDE SEQUENCE [LARGE SCALE GENOMIC DNA]</scope>
    <source>
        <strain>ED1a</strain>
    </source>
</reference>
<name>YHBQ_ECO81</name>
<gene>
    <name evidence="1" type="primary">yhbQ</name>
    <name type="ordered locus">ECED1_3815</name>
</gene>
<protein>
    <recommendedName>
        <fullName evidence="1">UPF0213 protein YhbQ</fullName>
    </recommendedName>
</protein>
<dbReference type="EMBL" id="CU928162">
    <property type="protein sequence ID" value="CAR09958.2"/>
    <property type="molecule type" value="Genomic_DNA"/>
</dbReference>
<dbReference type="RefSeq" id="WP_000189314.1">
    <property type="nucleotide sequence ID" value="NC_011745.1"/>
</dbReference>
<dbReference type="SMR" id="B7N0U0"/>
<dbReference type="GeneID" id="93778829"/>
<dbReference type="KEGG" id="ecq:ECED1_3815"/>
<dbReference type="HOGENOM" id="CLU_135650_0_1_6"/>
<dbReference type="Proteomes" id="UP000000748">
    <property type="component" value="Chromosome"/>
</dbReference>
<dbReference type="CDD" id="cd10456">
    <property type="entry name" value="GIY-YIG_UPF0213"/>
    <property type="match status" value="1"/>
</dbReference>
<dbReference type="FunFam" id="3.40.1440.10:FF:000002">
    <property type="entry name" value="UPF0213 protein YhbQ"/>
    <property type="match status" value="1"/>
</dbReference>
<dbReference type="Gene3D" id="3.40.1440.10">
    <property type="entry name" value="GIY-YIG endonuclease"/>
    <property type="match status" value="1"/>
</dbReference>
<dbReference type="HAMAP" id="MF_01029">
    <property type="entry name" value="UPF0213"/>
    <property type="match status" value="1"/>
</dbReference>
<dbReference type="InterPro" id="IPR000305">
    <property type="entry name" value="GIY-YIG_endonuc"/>
</dbReference>
<dbReference type="InterPro" id="IPR035901">
    <property type="entry name" value="GIY-YIG_endonuc_sf"/>
</dbReference>
<dbReference type="InterPro" id="IPR050190">
    <property type="entry name" value="UPF0213_domain"/>
</dbReference>
<dbReference type="InterPro" id="IPR022992">
    <property type="entry name" value="UPF0213_GIY-YIG_endonuc"/>
</dbReference>
<dbReference type="PANTHER" id="PTHR34477">
    <property type="entry name" value="UPF0213 PROTEIN YHBQ"/>
    <property type="match status" value="1"/>
</dbReference>
<dbReference type="PANTHER" id="PTHR34477:SF1">
    <property type="entry name" value="UPF0213 PROTEIN YHBQ"/>
    <property type="match status" value="1"/>
</dbReference>
<dbReference type="Pfam" id="PF01541">
    <property type="entry name" value="GIY-YIG"/>
    <property type="match status" value="1"/>
</dbReference>
<dbReference type="SMART" id="SM00465">
    <property type="entry name" value="GIYc"/>
    <property type="match status" value="1"/>
</dbReference>
<dbReference type="SUPFAM" id="SSF82771">
    <property type="entry name" value="GIY-YIG endonuclease"/>
    <property type="match status" value="1"/>
</dbReference>
<dbReference type="PROSITE" id="PS50164">
    <property type="entry name" value="GIY_YIG"/>
    <property type="match status" value="1"/>
</dbReference>
<sequence length="100" mass="11242">MTPWFLYLIRTADNKLYTGITTDVERRYQQHQSGKGAKALRGKGELTLAFSAPVGDRSLALRAEYRVKQLTKRQKERLVAEGAGFAELLSSLQTPEIKSD</sequence>
<comment type="similarity">
    <text evidence="1">Belongs to the UPF0213 family.</text>
</comment>
<organism>
    <name type="scientific">Escherichia coli O81 (strain ED1a)</name>
    <dbReference type="NCBI Taxonomy" id="585397"/>
    <lineage>
        <taxon>Bacteria</taxon>
        <taxon>Pseudomonadati</taxon>
        <taxon>Pseudomonadota</taxon>
        <taxon>Gammaproteobacteria</taxon>
        <taxon>Enterobacterales</taxon>
        <taxon>Enterobacteriaceae</taxon>
        <taxon>Escherichia</taxon>
    </lineage>
</organism>
<proteinExistence type="inferred from homology"/>
<evidence type="ECO:0000255" key="1">
    <source>
        <dbReference type="HAMAP-Rule" id="MF_01029"/>
    </source>
</evidence>
<accession>B7N0U0</accession>
<feature type="chain" id="PRO_1000149383" description="UPF0213 protein YhbQ">
    <location>
        <begin position="1"/>
        <end position="100"/>
    </location>
</feature>
<feature type="domain" description="GIY-YIG" evidence="1">
    <location>
        <begin position="2"/>
        <end position="77"/>
    </location>
</feature>